<sequence length="125" mass="14126">MIEQPRICVQVHSIYVETQSIPEEERFVFAYTVTVRNLGRSNVQLLGRYWLITNSNGRQTEVQGEGVIGEQPLILPGNEFQYTSGAVLETPLGTMEGHYEMIDHLGQAFRTVIPVFRLAIPALIH</sequence>
<protein>
    <recommendedName>
        <fullName evidence="1">Protein ApaG</fullName>
    </recommendedName>
</protein>
<proteinExistence type="inferred from homology"/>
<accession>A9QZZ1</accession>
<dbReference type="EMBL" id="CP000901">
    <property type="protein sequence ID" value="ABX87325.1"/>
    <property type="molecule type" value="Genomic_DNA"/>
</dbReference>
<dbReference type="RefSeq" id="WP_002210491.1">
    <property type="nucleotide sequence ID" value="NZ_CP009935.1"/>
</dbReference>
<dbReference type="SMR" id="A9QZZ1"/>
<dbReference type="GeneID" id="57974119"/>
<dbReference type="KEGG" id="ypg:YpAngola_A0773"/>
<dbReference type="PATRIC" id="fig|349746.12.peg.1720"/>
<dbReference type="GO" id="GO:0070987">
    <property type="term" value="P:error-free translesion synthesis"/>
    <property type="evidence" value="ECO:0007669"/>
    <property type="project" value="TreeGrafter"/>
</dbReference>
<dbReference type="Gene3D" id="2.60.40.1470">
    <property type="entry name" value="ApaG domain"/>
    <property type="match status" value="1"/>
</dbReference>
<dbReference type="HAMAP" id="MF_00791">
    <property type="entry name" value="ApaG"/>
    <property type="match status" value="1"/>
</dbReference>
<dbReference type="InterPro" id="IPR007474">
    <property type="entry name" value="ApaG_domain"/>
</dbReference>
<dbReference type="InterPro" id="IPR036767">
    <property type="entry name" value="ApaG_sf"/>
</dbReference>
<dbReference type="InterPro" id="IPR023065">
    <property type="entry name" value="Uncharacterised_ApaG"/>
</dbReference>
<dbReference type="NCBIfam" id="NF003967">
    <property type="entry name" value="PRK05461.1"/>
    <property type="match status" value="1"/>
</dbReference>
<dbReference type="PANTHER" id="PTHR14289">
    <property type="entry name" value="F-BOX ONLY PROTEIN 3"/>
    <property type="match status" value="1"/>
</dbReference>
<dbReference type="PANTHER" id="PTHR14289:SF16">
    <property type="entry name" value="POLYMERASE DELTA-INTERACTING PROTEIN 2"/>
    <property type="match status" value="1"/>
</dbReference>
<dbReference type="Pfam" id="PF04379">
    <property type="entry name" value="DUF525"/>
    <property type="match status" value="1"/>
</dbReference>
<dbReference type="SUPFAM" id="SSF110069">
    <property type="entry name" value="ApaG-like"/>
    <property type="match status" value="1"/>
</dbReference>
<dbReference type="PROSITE" id="PS51087">
    <property type="entry name" value="APAG"/>
    <property type="match status" value="1"/>
</dbReference>
<reference key="1">
    <citation type="journal article" date="2010" name="J. Bacteriol.">
        <title>Genome sequence of the deep-rooted Yersinia pestis strain Angola reveals new insights into the evolution and pangenome of the plague bacterium.</title>
        <authorList>
            <person name="Eppinger M."/>
            <person name="Worsham P.L."/>
            <person name="Nikolich M.P."/>
            <person name="Riley D.R."/>
            <person name="Sebastian Y."/>
            <person name="Mou S."/>
            <person name="Achtman M."/>
            <person name="Lindler L.E."/>
            <person name="Ravel J."/>
        </authorList>
    </citation>
    <scope>NUCLEOTIDE SEQUENCE [LARGE SCALE GENOMIC DNA]</scope>
    <source>
        <strain>Angola</strain>
    </source>
</reference>
<organism>
    <name type="scientific">Yersinia pestis bv. Antiqua (strain Angola)</name>
    <dbReference type="NCBI Taxonomy" id="349746"/>
    <lineage>
        <taxon>Bacteria</taxon>
        <taxon>Pseudomonadati</taxon>
        <taxon>Pseudomonadota</taxon>
        <taxon>Gammaproteobacteria</taxon>
        <taxon>Enterobacterales</taxon>
        <taxon>Yersiniaceae</taxon>
        <taxon>Yersinia</taxon>
    </lineage>
</organism>
<gene>
    <name evidence="1" type="primary">apaG</name>
    <name type="ordered locus">YpAngola_A0773</name>
</gene>
<evidence type="ECO:0000255" key="1">
    <source>
        <dbReference type="HAMAP-Rule" id="MF_00791"/>
    </source>
</evidence>
<feature type="chain" id="PRO_1000133825" description="Protein ApaG">
    <location>
        <begin position="1"/>
        <end position="125"/>
    </location>
</feature>
<feature type="domain" description="ApaG" evidence="1">
    <location>
        <begin position="1"/>
        <end position="125"/>
    </location>
</feature>
<name>APAG_YERPG</name>